<reference key="1">
    <citation type="journal article" date="1999" name="Nat. Genet.">
        <title>Comparative genomes of Chlamydia pneumoniae and C. trachomatis.</title>
        <authorList>
            <person name="Kalman S."/>
            <person name="Mitchell W.P."/>
            <person name="Marathe R."/>
            <person name="Lammel C.J."/>
            <person name="Fan J."/>
            <person name="Hyman R.W."/>
            <person name="Olinger L."/>
            <person name="Grimwood J."/>
            <person name="Davis R.W."/>
            <person name="Stephens R.S."/>
        </authorList>
    </citation>
    <scope>NUCLEOTIDE SEQUENCE [LARGE SCALE GENOMIC DNA]</scope>
    <source>
        <strain>CWL029</strain>
    </source>
</reference>
<reference key="2">
    <citation type="journal article" date="2000" name="Nucleic Acids Res.">
        <title>Genome sequences of Chlamydia trachomatis MoPn and Chlamydia pneumoniae AR39.</title>
        <authorList>
            <person name="Read T.D."/>
            <person name="Brunham R.C."/>
            <person name="Shen C."/>
            <person name="Gill S.R."/>
            <person name="Heidelberg J.F."/>
            <person name="White O."/>
            <person name="Hickey E.K."/>
            <person name="Peterson J.D."/>
            <person name="Utterback T.R."/>
            <person name="Berry K.J."/>
            <person name="Bass S."/>
            <person name="Linher K.D."/>
            <person name="Weidman J.F."/>
            <person name="Khouri H.M."/>
            <person name="Craven B."/>
            <person name="Bowman C."/>
            <person name="Dodson R.J."/>
            <person name="Gwinn M.L."/>
            <person name="Nelson W.C."/>
            <person name="DeBoy R.T."/>
            <person name="Kolonay J.F."/>
            <person name="McClarty G."/>
            <person name="Salzberg S.L."/>
            <person name="Eisen J.A."/>
            <person name="Fraser C.M."/>
        </authorList>
    </citation>
    <scope>NUCLEOTIDE SEQUENCE [LARGE SCALE GENOMIC DNA]</scope>
    <source>
        <strain>AR39</strain>
    </source>
</reference>
<reference key="3">
    <citation type="journal article" date="2000" name="Nucleic Acids Res.">
        <title>Comparison of whole genome sequences of Chlamydia pneumoniae J138 from Japan and CWL029 from USA.</title>
        <authorList>
            <person name="Shirai M."/>
            <person name="Hirakawa H."/>
            <person name="Kimoto M."/>
            <person name="Tabuchi M."/>
            <person name="Kishi F."/>
            <person name="Ouchi K."/>
            <person name="Shiba T."/>
            <person name="Ishii K."/>
            <person name="Hattori M."/>
            <person name="Kuhara S."/>
            <person name="Nakazawa T."/>
        </authorList>
    </citation>
    <scope>NUCLEOTIDE SEQUENCE [LARGE SCALE GENOMIC DNA]</scope>
    <source>
        <strain>J138</strain>
    </source>
</reference>
<reference key="4">
    <citation type="submission" date="2002-05" db="EMBL/GenBank/DDBJ databases">
        <title>The genome sequence of Chlamydia pneumoniae TW183 and comparison with other Chlamydia strains based on whole genome sequence analysis.</title>
        <authorList>
            <person name="Geng M.M."/>
            <person name="Schuhmacher A."/>
            <person name="Muehldorfer I."/>
            <person name="Bensch K.W."/>
            <person name="Schaefer K.P."/>
            <person name="Schneider S."/>
            <person name="Pohl T."/>
            <person name="Essig A."/>
            <person name="Marre R."/>
            <person name="Melchers K."/>
        </authorList>
    </citation>
    <scope>NUCLEOTIDE SEQUENCE [LARGE SCALE GENOMIC DNA]</scope>
    <source>
        <strain>TW-183</strain>
    </source>
</reference>
<keyword id="KW-0131">Cell cycle</keyword>
<keyword id="KW-0132">Cell division</keyword>
<keyword id="KW-0133">Cell shape</keyword>
<keyword id="KW-0961">Cell wall biogenesis/degradation</keyword>
<keyword id="KW-0963">Cytoplasm</keyword>
<keyword id="KW-0274">FAD</keyword>
<keyword id="KW-0285">Flavoprotein</keyword>
<keyword id="KW-0521">NADP</keyword>
<keyword id="KW-0560">Oxidoreductase</keyword>
<keyword id="KW-0573">Peptidoglycan synthesis</keyword>
<proteinExistence type="inferred from homology"/>
<protein>
    <recommendedName>
        <fullName>UDP-N-acetylenolpyruvoylglucosamine reductase</fullName>
        <ecNumber>1.3.1.98</ecNumber>
    </recommendedName>
    <alternativeName>
        <fullName>UDP-N-acetylmuramate dehydrogenase</fullName>
    </alternativeName>
</protein>
<accession>Q9Z6S1</accession>
<accession>Q9JRW3</accession>
<gene>
    <name type="primary">murB</name>
    <name type="ordered locus">CPn_0988</name>
    <name type="ordered locus">CP_0867</name>
    <name type="ordered locus">CpB1024</name>
</gene>
<evidence type="ECO:0000250" key="1"/>
<evidence type="ECO:0000305" key="2"/>
<organism>
    <name type="scientific">Chlamydia pneumoniae</name>
    <name type="common">Chlamydophila pneumoniae</name>
    <dbReference type="NCBI Taxonomy" id="83558"/>
    <lineage>
        <taxon>Bacteria</taxon>
        <taxon>Pseudomonadati</taxon>
        <taxon>Chlamydiota</taxon>
        <taxon>Chlamydiia</taxon>
        <taxon>Chlamydiales</taxon>
        <taxon>Chlamydiaceae</taxon>
        <taxon>Chlamydia/Chlamydophila group</taxon>
        <taxon>Chlamydia</taxon>
    </lineage>
</organism>
<sequence length="304" mass="33456">MKEAAPMHFPFPVRRSVWLNRYSTFRIGGPANYFKAIHTIEEAREVIRFLHSINYPFLIIGKGSNCLFDDRGFDGFVLYNAIYGKQFLEDARIKAYSGLSFAALGKATAYNGYSGLEFAAGIPGSVGGAIFMNAGTNESDISSVVRNVETINSEGELCSYSVEELELSYRSSRFHRQQEFILSATLQLSKKQVSADHSKSILQHRLMTQPYTQPSAGCIFRNPEGTSAGKLIDAAGLKGLAIGGAQISPLHANFIINTGKATSDEVKQLIAIIQSTLKTQGIDLEHEIRIIPYQPKIHSPVSEK</sequence>
<comment type="function">
    <text evidence="1">Cell wall formation.</text>
</comment>
<comment type="catalytic activity">
    <reaction>
        <text>UDP-N-acetyl-alpha-D-muramate + NADP(+) = UDP-N-acetyl-3-O-(1-carboxyvinyl)-alpha-D-glucosamine + NADPH + H(+)</text>
        <dbReference type="Rhea" id="RHEA:12248"/>
        <dbReference type="ChEBI" id="CHEBI:15378"/>
        <dbReference type="ChEBI" id="CHEBI:57783"/>
        <dbReference type="ChEBI" id="CHEBI:58349"/>
        <dbReference type="ChEBI" id="CHEBI:68483"/>
        <dbReference type="ChEBI" id="CHEBI:70757"/>
        <dbReference type="EC" id="1.3.1.98"/>
    </reaction>
</comment>
<comment type="cofactor">
    <cofactor evidence="1">
        <name>FAD</name>
        <dbReference type="ChEBI" id="CHEBI:57692"/>
    </cofactor>
</comment>
<comment type="pathway">
    <text>Cell wall biogenesis; peptidoglycan biosynthesis.</text>
</comment>
<comment type="subcellular location">
    <subcellularLocation>
        <location evidence="1">Cytoplasm</location>
    </subcellularLocation>
</comment>
<comment type="similarity">
    <text evidence="2">Belongs to the MurB family.</text>
</comment>
<comment type="sequence caution" evidence="2">
    <conflict type="erroneous initiation">
        <sequence resource="EMBL-CDS" id="AAP98954"/>
    </conflict>
</comment>
<name>MURB_CHLPN</name>
<feature type="chain" id="PRO_0000179196" description="UDP-N-acetylenolpyruvoylglucosamine reductase">
    <location>
        <begin position="1"/>
        <end position="304"/>
    </location>
</feature>
<feature type="domain" description="FAD-binding PCMH-type">
    <location>
        <begin position="26"/>
        <end position="191"/>
    </location>
</feature>
<feature type="active site" evidence="1">
    <location>
        <position position="170"/>
    </location>
</feature>
<feature type="active site" description="Proton donor" evidence="1">
    <location>
        <position position="218"/>
    </location>
</feature>
<feature type="active site" evidence="1">
    <location>
        <position position="287"/>
    </location>
</feature>
<feature type="sequence variant" description="In strain: CWL029 and TW-183.">
    <original>L</original>
    <variation>F</variation>
    <location>
        <position position="186"/>
    </location>
</feature>
<dbReference type="EC" id="1.3.1.98"/>
<dbReference type="EMBL" id="AE001363">
    <property type="protein sequence ID" value="AAD19125.1"/>
    <property type="molecule type" value="Genomic_DNA"/>
</dbReference>
<dbReference type="EMBL" id="AE002161">
    <property type="protein sequence ID" value="AAF38656.1"/>
    <property type="molecule type" value="Genomic_DNA"/>
</dbReference>
<dbReference type="EMBL" id="BA000008">
    <property type="protein sequence ID" value="BAA99195.1"/>
    <property type="molecule type" value="Genomic_DNA"/>
</dbReference>
<dbReference type="EMBL" id="AE009440">
    <property type="protein sequence ID" value="AAP98954.1"/>
    <property type="status" value="ALT_INIT"/>
    <property type="molecule type" value="Genomic_DNA"/>
</dbReference>
<dbReference type="PIR" id="A86614">
    <property type="entry name" value="A86614"/>
</dbReference>
<dbReference type="PIR" id="C81530">
    <property type="entry name" value="C81530"/>
</dbReference>
<dbReference type="PIR" id="E72010">
    <property type="entry name" value="E72010"/>
</dbReference>
<dbReference type="RefSeq" id="NP_225182.1">
    <property type="nucleotide sequence ID" value="NC_000922.1"/>
</dbReference>
<dbReference type="SMR" id="Q9Z6S1"/>
<dbReference type="STRING" id="406984.CPK_ORF00412"/>
<dbReference type="KEGG" id="cpa:CP_0867"/>
<dbReference type="KEGG" id="cpj:murB"/>
<dbReference type="KEGG" id="cpn:CPn_0988"/>
<dbReference type="KEGG" id="cpt:CpB1024"/>
<dbReference type="PATRIC" id="fig|115713.3.peg.1083"/>
<dbReference type="eggNOG" id="COG0812">
    <property type="taxonomic scope" value="Bacteria"/>
</dbReference>
<dbReference type="HOGENOM" id="CLU_035304_1_1_0"/>
<dbReference type="UniPathway" id="UPA00219"/>
<dbReference type="Proteomes" id="UP000000583">
    <property type="component" value="Chromosome"/>
</dbReference>
<dbReference type="Proteomes" id="UP000000801">
    <property type="component" value="Chromosome"/>
</dbReference>
<dbReference type="GO" id="GO:0005829">
    <property type="term" value="C:cytosol"/>
    <property type="evidence" value="ECO:0007669"/>
    <property type="project" value="TreeGrafter"/>
</dbReference>
<dbReference type="GO" id="GO:0071949">
    <property type="term" value="F:FAD binding"/>
    <property type="evidence" value="ECO:0007669"/>
    <property type="project" value="InterPro"/>
</dbReference>
<dbReference type="GO" id="GO:0008762">
    <property type="term" value="F:UDP-N-acetylmuramate dehydrogenase activity"/>
    <property type="evidence" value="ECO:0007669"/>
    <property type="project" value="UniProtKB-UniRule"/>
</dbReference>
<dbReference type="GO" id="GO:0051301">
    <property type="term" value="P:cell division"/>
    <property type="evidence" value="ECO:0007669"/>
    <property type="project" value="UniProtKB-KW"/>
</dbReference>
<dbReference type="GO" id="GO:0071555">
    <property type="term" value="P:cell wall organization"/>
    <property type="evidence" value="ECO:0007669"/>
    <property type="project" value="UniProtKB-KW"/>
</dbReference>
<dbReference type="GO" id="GO:0009252">
    <property type="term" value="P:peptidoglycan biosynthetic process"/>
    <property type="evidence" value="ECO:0007669"/>
    <property type="project" value="UniProtKB-UniRule"/>
</dbReference>
<dbReference type="GO" id="GO:0008360">
    <property type="term" value="P:regulation of cell shape"/>
    <property type="evidence" value="ECO:0007669"/>
    <property type="project" value="UniProtKB-KW"/>
</dbReference>
<dbReference type="Gene3D" id="3.30.465.10">
    <property type="match status" value="1"/>
</dbReference>
<dbReference type="Gene3D" id="3.90.78.10">
    <property type="entry name" value="UDP-N-acetylenolpyruvoylglucosamine reductase, C-terminal domain"/>
    <property type="match status" value="1"/>
</dbReference>
<dbReference type="Gene3D" id="3.30.43.10">
    <property type="entry name" value="Uridine Diphospho-n-acetylenolpyruvylglucosamine Reductase, domain 2"/>
    <property type="match status" value="1"/>
</dbReference>
<dbReference type="HAMAP" id="MF_00037">
    <property type="entry name" value="MurB"/>
    <property type="match status" value="1"/>
</dbReference>
<dbReference type="InterPro" id="IPR016166">
    <property type="entry name" value="FAD-bd_PCMH"/>
</dbReference>
<dbReference type="InterPro" id="IPR036318">
    <property type="entry name" value="FAD-bd_PCMH-like_sf"/>
</dbReference>
<dbReference type="InterPro" id="IPR016167">
    <property type="entry name" value="FAD-bd_PCMH_sub1"/>
</dbReference>
<dbReference type="InterPro" id="IPR016169">
    <property type="entry name" value="FAD-bd_PCMH_sub2"/>
</dbReference>
<dbReference type="InterPro" id="IPR003170">
    <property type="entry name" value="MurB"/>
</dbReference>
<dbReference type="InterPro" id="IPR011601">
    <property type="entry name" value="MurB_C"/>
</dbReference>
<dbReference type="InterPro" id="IPR036635">
    <property type="entry name" value="MurB_C_sf"/>
</dbReference>
<dbReference type="InterPro" id="IPR006094">
    <property type="entry name" value="Oxid_FAD_bind_N"/>
</dbReference>
<dbReference type="NCBIfam" id="TIGR00179">
    <property type="entry name" value="murB"/>
    <property type="match status" value="1"/>
</dbReference>
<dbReference type="NCBIfam" id="NF010480">
    <property type="entry name" value="PRK13905.1"/>
    <property type="match status" value="1"/>
</dbReference>
<dbReference type="PANTHER" id="PTHR21071">
    <property type="entry name" value="UDP-N-ACETYLENOLPYRUVOYLGLUCOSAMINE REDUCTASE"/>
    <property type="match status" value="1"/>
</dbReference>
<dbReference type="PANTHER" id="PTHR21071:SF4">
    <property type="entry name" value="UDP-N-ACETYLENOLPYRUVOYLGLUCOSAMINE REDUCTASE"/>
    <property type="match status" value="1"/>
</dbReference>
<dbReference type="Pfam" id="PF01565">
    <property type="entry name" value="FAD_binding_4"/>
    <property type="match status" value="1"/>
</dbReference>
<dbReference type="Pfam" id="PF02873">
    <property type="entry name" value="MurB_C"/>
    <property type="match status" value="1"/>
</dbReference>
<dbReference type="SUPFAM" id="SSF56176">
    <property type="entry name" value="FAD-binding/transporter-associated domain-like"/>
    <property type="match status" value="1"/>
</dbReference>
<dbReference type="SUPFAM" id="SSF56194">
    <property type="entry name" value="Uridine diphospho-N-Acetylenolpyruvylglucosamine reductase, MurB, C-terminal domain"/>
    <property type="match status" value="1"/>
</dbReference>
<dbReference type="PROSITE" id="PS51387">
    <property type="entry name" value="FAD_PCMH"/>
    <property type="match status" value="1"/>
</dbReference>